<keyword id="KW-0963">Cytoplasm</keyword>
<keyword id="KW-0489">Methyltransferase</keyword>
<keyword id="KW-1185">Reference proteome</keyword>
<keyword id="KW-0694">RNA-binding</keyword>
<keyword id="KW-0698">rRNA processing</keyword>
<keyword id="KW-0949">S-adenosyl-L-methionine</keyword>
<keyword id="KW-0808">Transferase</keyword>
<protein>
    <recommendedName>
        <fullName evidence="1">Ribosomal RNA small subunit methyltransferase F</fullName>
        <ecNumber evidence="1">2.1.1.178</ecNumber>
    </recommendedName>
    <alternativeName>
        <fullName evidence="1">16S rRNA m5C1407 methyltransferase</fullName>
    </alternativeName>
    <alternativeName>
        <fullName evidence="1">rRNA (cytosine-C(5)-)-methyltransferase RsmF</fullName>
    </alternativeName>
</protein>
<organism>
    <name type="scientific">Aeromonas hydrophila subsp. hydrophila (strain ATCC 7966 / DSM 30187 / BCRC 13018 / CCUG 14551 / JCM 1027 / KCTC 2358 / NCIMB 9240 / NCTC 8049)</name>
    <dbReference type="NCBI Taxonomy" id="380703"/>
    <lineage>
        <taxon>Bacteria</taxon>
        <taxon>Pseudomonadati</taxon>
        <taxon>Pseudomonadota</taxon>
        <taxon>Gammaproteobacteria</taxon>
        <taxon>Aeromonadales</taxon>
        <taxon>Aeromonadaceae</taxon>
        <taxon>Aeromonas</taxon>
    </lineage>
</organism>
<feature type="chain" id="PRO_0000284995" description="Ribosomal RNA small subunit methyltransferase F">
    <location>
        <begin position="1"/>
        <end position="475"/>
    </location>
</feature>
<feature type="active site" description="Nucleophile" evidence="1">
    <location>
        <position position="247"/>
    </location>
</feature>
<feature type="binding site" evidence="1">
    <location>
        <begin position="125"/>
        <end position="131"/>
    </location>
    <ligand>
        <name>S-adenosyl-L-methionine</name>
        <dbReference type="ChEBI" id="CHEBI:59789"/>
    </ligand>
</feature>
<feature type="binding site" evidence="1">
    <location>
        <position position="149"/>
    </location>
    <ligand>
        <name>S-adenosyl-L-methionine</name>
        <dbReference type="ChEBI" id="CHEBI:59789"/>
    </ligand>
</feature>
<feature type="binding site" evidence="1">
    <location>
        <position position="176"/>
    </location>
    <ligand>
        <name>S-adenosyl-L-methionine</name>
        <dbReference type="ChEBI" id="CHEBI:59789"/>
    </ligand>
</feature>
<feature type="binding site" evidence="1">
    <location>
        <position position="194"/>
    </location>
    <ligand>
        <name>S-adenosyl-L-methionine</name>
        <dbReference type="ChEBI" id="CHEBI:59789"/>
    </ligand>
</feature>
<evidence type="ECO:0000255" key="1">
    <source>
        <dbReference type="HAMAP-Rule" id="MF_01579"/>
    </source>
</evidence>
<evidence type="ECO:0000305" key="2"/>
<gene>
    <name evidence="1" type="primary">rsmF</name>
    <name type="ordered locus">AHA_2262</name>
</gene>
<sequence length="475" mass="52829">MHDNTYLPDHFLRHIAAIMPAHLSMDEFVASCRRPLRRSIRVNTLKISVAAFVARMQPLGWQLDPVPWCDTGFWLSREDESVPLGNTAEHLSGLFYIQEASSMLPVTALFACEQTRRDGMLLDAAAAPGSKTTQIAALMNNQGMLVANEYSSSRLKVLSANLQRCGVTNVGMTHFDAKVFGQWLPETFDAILLDAPCSGEGSVRKDEDALRNWSIESIDEIAAVQQGLLESAFHALKPGGVLVYSTCTLSLQENQAVCQSLLDKFGAAFSFDSLADLFPAAEQACTPEGYLHVWPQIFDSEGFFVARLRKHYSVPNTMFKPGKLGKFPFLPLPAKESEPMLREIEAAFGVVPQGNLFGRSEEIWLFPQRFEQVQGKLRFDRIGLKLAETFKKGYRLTHEWALAYGDGASKGFVELGIADAREFMMGRDVWPEQAAGTGEVIVRYQGHTLGMGKWVGSRVKNALPRELVRDNNLFV</sequence>
<reference key="1">
    <citation type="journal article" date="2006" name="J. Bacteriol.">
        <title>Genome sequence of Aeromonas hydrophila ATCC 7966T: jack of all trades.</title>
        <authorList>
            <person name="Seshadri R."/>
            <person name="Joseph S.W."/>
            <person name="Chopra A.K."/>
            <person name="Sha J."/>
            <person name="Shaw J."/>
            <person name="Graf J."/>
            <person name="Haft D.H."/>
            <person name="Wu M."/>
            <person name="Ren Q."/>
            <person name="Rosovitz M.J."/>
            <person name="Madupu R."/>
            <person name="Tallon L."/>
            <person name="Kim M."/>
            <person name="Jin S."/>
            <person name="Vuong H."/>
            <person name="Stine O.C."/>
            <person name="Ali A."/>
            <person name="Horneman A.J."/>
            <person name="Heidelberg J.F."/>
        </authorList>
    </citation>
    <scope>NUCLEOTIDE SEQUENCE [LARGE SCALE GENOMIC DNA]</scope>
    <source>
        <strain>ATCC 7966 / DSM 30187 / BCRC 13018 / CCUG 14551 / JCM 1027 / KCTC 2358 / NCIMB 9240 / NCTC 8049</strain>
    </source>
</reference>
<accession>A0KKI5</accession>
<comment type="function">
    <text evidence="1">Specifically methylates the cytosine at position 1407 (m5C1407) of 16S rRNA.</text>
</comment>
<comment type="catalytic activity">
    <reaction evidence="1">
        <text>cytidine(1407) in 16S rRNA + S-adenosyl-L-methionine = 5-methylcytidine(1407) in 16S rRNA + S-adenosyl-L-homocysteine + H(+)</text>
        <dbReference type="Rhea" id="RHEA:42756"/>
        <dbReference type="Rhea" id="RHEA-COMP:10223"/>
        <dbReference type="Rhea" id="RHEA-COMP:10224"/>
        <dbReference type="ChEBI" id="CHEBI:15378"/>
        <dbReference type="ChEBI" id="CHEBI:57856"/>
        <dbReference type="ChEBI" id="CHEBI:59789"/>
        <dbReference type="ChEBI" id="CHEBI:74483"/>
        <dbReference type="ChEBI" id="CHEBI:82748"/>
        <dbReference type="EC" id="2.1.1.178"/>
    </reaction>
</comment>
<comment type="subcellular location">
    <subcellularLocation>
        <location evidence="1">Cytoplasm</location>
    </subcellularLocation>
</comment>
<comment type="similarity">
    <text evidence="1">Belongs to the class I-like SAM-binding methyltransferase superfamily. RsmB/NOP family.</text>
</comment>
<comment type="sequence caution" evidence="2">
    <conflict type="erroneous initiation">
        <sequence resource="EMBL-CDS" id="ABK39873"/>
    </conflict>
</comment>
<dbReference type="EC" id="2.1.1.178" evidence="1"/>
<dbReference type="EMBL" id="CP000462">
    <property type="protein sequence ID" value="ABK39873.1"/>
    <property type="status" value="ALT_INIT"/>
    <property type="molecule type" value="Genomic_DNA"/>
</dbReference>
<dbReference type="RefSeq" id="WP_164927794.1">
    <property type="nucleotide sequence ID" value="NC_008570.1"/>
</dbReference>
<dbReference type="RefSeq" id="YP_856786.1">
    <property type="nucleotide sequence ID" value="NC_008570.1"/>
</dbReference>
<dbReference type="SMR" id="A0KKI5"/>
<dbReference type="STRING" id="380703.AHA_2262"/>
<dbReference type="EnsemblBacteria" id="ABK39873">
    <property type="protein sequence ID" value="ABK39873"/>
    <property type="gene ID" value="AHA_2262"/>
</dbReference>
<dbReference type="GeneID" id="4488729"/>
<dbReference type="KEGG" id="aha:AHA_2262"/>
<dbReference type="PATRIC" id="fig|380703.7.peg.2261"/>
<dbReference type="eggNOG" id="COG0144">
    <property type="taxonomic scope" value="Bacteria"/>
</dbReference>
<dbReference type="eggNOG" id="COG3270">
    <property type="taxonomic scope" value="Bacteria"/>
</dbReference>
<dbReference type="HOGENOM" id="CLU_005316_6_2_6"/>
<dbReference type="OrthoDB" id="9810297at2"/>
<dbReference type="Proteomes" id="UP000000756">
    <property type="component" value="Chromosome"/>
</dbReference>
<dbReference type="GO" id="GO:0005737">
    <property type="term" value="C:cytoplasm"/>
    <property type="evidence" value="ECO:0007669"/>
    <property type="project" value="UniProtKB-SubCell"/>
</dbReference>
<dbReference type="GO" id="GO:0003723">
    <property type="term" value="F:RNA binding"/>
    <property type="evidence" value="ECO:0007669"/>
    <property type="project" value="UniProtKB-KW"/>
</dbReference>
<dbReference type="GO" id="GO:0009383">
    <property type="term" value="F:rRNA (cytosine-C5-)-methyltransferase activity"/>
    <property type="evidence" value="ECO:0007669"/>
    <property type="project" value="TreeGrafter"/>
</dbReference>
<dbReference type="GO" id="GO:0070475">
    <property type="term" value="P:rRNA base methylation"/>
    <property type="evidence" value="ECO:0007669"/>
    <property type="project" value="TreeGrafter"/>
</dbReference>
<dbReference type="CDD" id="cd02440">
    <property type="entry name" value="AdoMet_MTases"/>
    <property type="match status" value="1"/>
</dbReference>
<dbReference type="Gene3D" id="3.10.450.720">
    <property type="match status" value="1"/>
</dbReference>
<dbReference type="Gene3D" id="3.40.50.150">
    <property type="entry name" value="Vaccinia Virus protein VP39"/>
    <property type="match status" value="1"/>
</dbReference>
<dbReference type="HAMAP" id="MF_01579">
    <property type="entry name" value="16SrRNA_methyltr_F"/>
    <property type="match status" value="1"/>
</dbReference>
<dbReference type="InterPro" id="IPR031341">
    <property type="entry name" value="Methyltr_RsmF_N"/>
</dbReference>
<dbReference type="InterPro" id="IPR049560">
    <property type="entry name" value="MeTrfase_RsmB-F_NOP2_cat"/>
</dbReference>
<dbReference type="InterPro" id="IPR001678">
    <property type="entry name" value="MeTrfase_RsmB-F_NOP2_dom"/>
</dbReference>
<dbReference type="InterPro" id="IPR027391">
    <property type="entry name" value="Nol1_Nop2_Fmu_2"/>
</dbReference>
<dbReference type="InterPro" id="IPR011023">
    <property type="entry name" value="Nop2p"/>
</dbReference>
<dbReference type="InterPro" id="IPR023267">
    <property type="entry name" value="RCMT"/>
</dbReference>
<dbReference type="InterPro" id="IPR023545">
    <property type="entry name" value="rRNA_ssu_MeTfrase_F"/>
</dbReference>
<dbReference type="InterPro" id="IPR018314">
    <property type="entry name" value="RsmB/NOL1/NOP2-like_CS"/>
</dbReference>
<dbReference type="InterPro" id="IPR029063">
    <property type="entry name" value="SAM-dependent_MTases_sf"/>
</dbReference>
<dbReference type="InterPro" id="IPR048457">
    <property type="entry name" value="YebU_pre-PUA_dom"/>
</dbReference>
<dbReference type="NCBIfam" id="TIGR00446">
    <property type="entry name" value="nop2p"/>
    <property type="match status" value="1"/>
</dbReference>
<dbReference type="NCBIfam" id="NF008898">
    <property type="entry name" value="PRK11933.1"/>
    <property type="match status" value="1"/>
</dbReference>
<dbReference type="PANTHER" id="PTHR22807:SF30">
    <property type="entry name" value="28S RRNA (CYTOSINE(4447)-C(5))-METHYLTRANSFERASE-RELATED"/>
    <property type="match status" value="1"/>
</dbReference>
<dbReference type="PANTHER" id="PTHR22807">
    <property type="entry name" value="NOP2 YEAST -RELATED NOL1/NOP2/FMU SUN DOMAIN-CONTAINING"/>
    <property type="match status" value="1"/>
</dbReference>
<dbReference type="Pfam" id="PF01189">
    <property type="entry name" value="Methyltr_RsmB-F"/>
    <property type="match status" value="1"/>
</dbReference>
<dbReference type="Pfam" id="PF17125">
    <property type="entry name" value="Methyltr_RsmF_N"/>
    <property type="match status" value="1"/>
</dbReference>
<dbReference type="Pfam" id="PF13636">
    <property type="entry name" value="Methyltranf_PUA"/>
    <property type="match status" value="1"/>
</dbReference>
<dbReference type="Pfam" id="PF21150">
    <property type="entry name" value="YebU_pre-PUA_dom"/>
    <property type="match status" value="1"/>
</dbReference>
<dbReference type="PRINTS" id="PR02008">
    <property type="entry name" value="RCMTFAMILY"/>
</dbReference>
<dbReference type="SUPFAM" id="SSF53335">
    <property type="entry name" value="S-adenosyl-L-methionine-dependent methyltransferases"/>
    <property type="match status" value="1"/>
</dbReference>
<dbReference type="PROSITE" id="PS01153">
    <property type="entry name" value="NOL1_NOP2_SUN"/>
    <property type="match status" value="1"/>
</dbReference>
<dbReference type="PROSITE" id="PS51686">
    <property type="entry name" value="SAM_MT_RSMB_NOP"/>
    <property type="match status" value="1"/>
</dbReference>
<name>RSMF_AERHH</name>
<proteinExistence type="inferred from homology"/>